<gene>
    <name evidence="1" type="primary">obg</name>
    <name type="ordered locus">FTL_1874</name>
</gene>
<protein>
    <recommendedName>
        <fullName evidence="1">GTPase Obg</fullName>
        <ecNumber evidence="1">3.6.5.-</ecNumber>
    </recommendedName>
    <alternativeName>
        <fullName evidence="1">GTP-binding protein Obg</fullName>
    </alternativeName>
</protein>
<evidence type="ECO:0000255" key="1">
    <source>
        <dbReference type="HAMAP-Rule" id="MF_01454"/>
    </source>
</evidence>
<evidence type="ECO:0000255" key="2">
    <source>
        <dbReference type="PROSITE-ProRule" id="PRU01231"/>
    </source>
</evidence>
<proteinExistence type="inferred from homology"/>
<organism>
    <name type="scientific">Francisella tularensis subsp. holarctica (strain LVS)</name>
    <dbReference type="NCBI Taxonomy" id="376619"/>
    <lineage>
        <taxon>Bacteria</taxon>
        <taxon>Pseudomonadati</taxon>
        <taxon>Pseudomonadota</taxon>
        <taxon>Gammaproteobacteria</taxon>
        <taxon>Thiotrichales</taxon>
        <taxon>Francisellaceae</taxon>
        <taxon>Francisella</taxon>
    </lineage>
</organism>
<sequence>MRFVDEVVIKLQAGKGGNGCVSFRREKYVPCGGPDGGDGGNGGSIYLKADENVNTLIDYRYKREYYAENGRPGEGRNCYGKAGEDLYLVVPVGTSVFDIDTNKKIGEVLQHGQTFKLVSGGKRGIGNTHFKSSTNQAPRKFTLGEEGEYKEVRLELNLLADVALLGLPNAGKSTLIRSVSEATPKVADYPFTTMYPHLGVVKVGVDSFVMADIPGVIEGAAEGAGLGLRFLKHLTRARCVLHVVDICPFNESDPVENYFAVEKELEKYSQELFDKLRFLVINKIDLLADKVEQKCQEFVEQIGYQGNYYTISAAMKKGTDELAKKLNEFLQKQE</sequence>
<accession>Q2A1B4</accession>
<keyword id="KW-0963">Cytoplasm</keyword>
<keyword id="KW-0342">GTP-binding</keyword>
<keyword id="KW-0378">Hydrolase</keyword>
<keyword id="KW-0460">Magnesium</keyword>
<keyword id="KW-0479">Metal-binding</keyword>
<keyword id="KW-0547">Nucleotide-binding</keyword>
<keyword id="KW-1185">Reference proteome</keyword>
<reference key="1">
    <citation type="submission" date="2006-03" db="EMBL/GenBank/DDBJ databases">
        <title>Complete genome sequence of Francisella tularensis LVS (Live Vaccine Strain).</title>
        <authorList>
            <person name="Chain P."/>
            <person name="Larimer F."/>
            <person name="Land M."/>
            <person name="Stilwagen S."/>
            <person name="Larsson P."/>
            <person name="Bearden S."/>
            <person name="Chu M."/>
            <person name="Oyston P."/>
            <person name="Forsman M."/>
            <person name="Andersson S."/>
            <person name="Lindler L."/>
            <person name="Titball R."/>
            <person name="Garcia E."/>
        </authorList>
    </citation>
    <scope>NUCLEOTIDE SEQUENCE [LARGE SCALE GENOMIC DNA]</scope>
    <source>
        <strain>LVS</strain>
    </source>
</reference>
<dbReference type="EC" id="3.6.5.-" evidence="1"/>
<dbReference type="EMBL" id="AM233362">
    <property type="protein sequence ID" value="CAJ80313.1"/>
    <property type="molecule type" value="Genomic_DNA"/>
</dbReference>
<dbReference type="SMR" id="Q2A1B4"/>
<dbReference type="KEGG" id="ftl:FTL_1874"/>
<dbReference type="Proteomes" id="UP000001944">
    <property type="component" value="Chromosome"/>
</dbReference>
<dbReference type="GO" id="GO:0005737">
    <property type="term" value="C:cytoplasm"/>
    <property type="evidence" value="ECO:0007669"/>
    <property type="project" value="UniProtKB-SubCell"/>
</dbReference>
<dbReference type="GO" id="GO:0005525">
    <property type="term" value="F:GTP binding"/>
    <property type="evidence" value="ECO:0007669"/>
    <property type="project" value="UniProtKB-UniRule"/>
</dbReference>
<dbReference type="GO" id="GO:0003924">
    <property type="term" value="F:GTPase activity"/>
    <property type="evidence" value="ECO:0007669"/>
    <property type="project" value="UniProtKB-UniRule"/>
</dbReference>
<dbReference type="GO" id="GO:0000287">
    <property type="term" value="F:magnesium ion binding"/>
    <property type="evidence" value="ECO:0007669"/>
    <property type="project" value="InterPro"/>
</dbReference>
<dbReference type="GO" id="GO:0042254">
    <property type="term" value="P:ribosome biogenesis"/>
    <property type="evidence" value="ECO:0007669"/>
    <property type="project" value="UniProtKB-UniRule"/>
</dbReference>
<dbReference type="CDD" id="cd01898">
    <property type="entry name" value="Obg"/>
    <property type="match status" value="1"/>
</dbReference>
<dbReference type="FunFam" id="2.70.210.12:FF:000001">
    <property type="entry name" value="GTPase Obg"/>
    <property type="match status" value="1"/>
</dbReference>
<dbReference type="Gene3D" id="2.70.210.12">
    <property type="entry name" value="GTP1/OBG domain"/>
    <property type="match status" value="1"/>
</dbReference>
<dbReference type="Gene3D" id="3.40.50.300">
    <property type="entry name" value="P-loop containing nucleotide triphosphate hydrolases"/>
    <property type="match status" value="1"/>
</dbReference>
<dbReference type="HAMAP" id="MF_01454">
    <property type="entry name" value="GTPase_Obg"/>
    <property type="match status" value="1"/>
</dbReference>
<dbReference type="InterPro" id="IPR031167">
    <property type="entry name" value="G_OBG"/>
</dbReference>
<dbReference type="InterPro" id="IPR006073">
    <property type="entry name" value="GTP-bd"/>
</dbReference>
<dbReference type="InterPro" id="IPR014100">
    <property type="entry name" value="GTP-bd_Obg/CgtA"/>
</dbReference>
<dbReference type="InterPro" id="IPR006074">
    <property type="entry name" value="GTP1-OBG_CS"/>
</dbReference>
<dbReference type="InterPro" id="IPR006169">
    <property type="entry name" value="GTP1_OBG_dom"/>
</dbReference>
<dbReference type="InterPro" id="IPR036726">
    <property type="entry name" value="GTP1_OBG_dom_sf"/>
</dbReference>
<dbReference type="InterPro" id="IPR045086">
    <property type="entry name" value="OBG_GTPase"/>
</dbReference>
<dbReference type="InterPro" id="IPR027417">
    <property type="entry name" value="P-loop_NTPase"/>
</dbReference>
<dbReference type="NCBIfam" id="TIGR02729">
    <property type="entry name" value="Obg_CgtA"/>
    <property type="match status" value="1"/>
</dbReference>
<dbReference type="NCBIfam" id="NF008955">
    <property type="entry name" value="PRK12297.1"/>
    <property type="match status" value="1"/>
</dbReference>
<dbReference type="NCBIfam" id="NF008956">
    <property type="entry name" value="PRK12299.1"/>
    <property type="match status" value="1"/>
</dbReference>
<dbReference type="PANTHER" id="PTHR11702">
    <property type="entry name" value="DEVELOPMENTALLY REGULATED GTP-BINDING PROTEIN-RELATED"/>
    <property type="match status" value="1"/>
</dbReference>
<dbReference type="PANTHER" id="PTHR11702:SF31">
    <property type="entry name" value="MITOCHONDRIAL RIBOSOME-ASSOCIATED GTPASE 2"/>
    <property type="match status" value="1"/>
</dbReference>
<dbReference type="Pfam" id="PF01018">
    <property type="entry name" value="GTP1_OBG"/>
    <property type="match status" value="1"/>
</dbReference>
<dbReference type="Pfam" id="PF01926">
    <property type="entry name" value="MMR_HSR1"/>
    <property type="match status" value="1"/>
</dbReference>
<dbReference type="PIRSF" id="PIRSF002401">
    <property type="entry name" value="GTP_bd_Obg/CgtA"/>
    <property type="match status" value="1"/>
</dbReference>
<dbReference type="PRINTS" id="PR00326">
    <property type="entry name" value="GTP1OBG"/>
</dbReference>
<dbReference type="SUPFAM" id="SSF82051">
    <property type="entry name" value="Obg GTP-binding protein N-terminal domain"/>
    <property type="match status" value="1"/>
</dbReference>
<dbReference type="SUPFAM" id="SSF52540">
    <property type="entry name" value="P-loop containing nucleoside triphosphate hydrolases"/>
    <property type="match status" value="1"/>
</dbReference>
<dbReference type="PROSITE" id="PS51710">
    <property type="entry name" value="G_OBG"/>
    <property type="match status" value="1"/>
</dbReference>
<dbReference type="PROSITE" id="PS00905">
    <property type="entry name" value="GTP1_OBG"/>
    <property type="match status" value="1"/>
</dbReference>
<dbReference type="PROSITE" id="PS51883">
    <property type="entry name" value="OBG"/>
    <property type="match status" value="1"/>
</dbReference>
<name>OBG_FRATH</name>
<feature type="chain" id="PRO_0000385937" description="GTPase Obg">
    <location>
        <begin position="1"/>
        <end position="334"/>
    </location>
</feature>
<feature type="domain" description="Obg" evidence="2">
    <location>
        <begin position="1"/>
        <end position="159"/>
    </location>
</feature>
<feature type="domain" description="OBG-type G" evidence="1">
    <location>
        <begin position="160"/>
        <end position="331"/>
    </location>
</feature>
<feature type="binding site" evidence="1">
    <location>
        <begin position="166"/>
        <end position="173"/>
    </location>
    <ligand>
        <name>GTP</name>
        <dbReference type="ChEBI" id="CHEBI:37565"/>
    </ligand>
</feature>
<feature type="binding site" evidence="1">
    <location>
        <position position="173"/>
    </location>
    <ligand>
        <name>Mg(2+)</name>
        <dbReference type="ChEBI" id="CHEBI:18420"/>
    </ligand>
</feature>
<feature type="binding site" evidence="1">
    <location>
        <begin position="191"/>
        <end position="195"/>
    </location>
    <ligand>
        <name>GTP</name>
        <dbReference type="ChEBI" id="CHEBI:37565"/>
    </ligand>
</feature>
<feature type="binding site" evidence="1">
    <location>
        <position position="193"/>
    </location>
    <ligand>
        <name>Mg(2+)</name>
        <dbReference type="ChEBI" id="CHEBI:18420"/>
    </ligand>
</feature>
<feature type="binding site" evidence="1">
    <location>
        <begin position="212"/>
        <end position="215"/>
    </location>
    <ligand>
        <name>GTP</name>
        <dbReference type="ChEBI" id="CHEBI:37565"/>
    </ligand>
</feature>
<feature type="binding site" evidence="1">
    <location>
        <begin position="282"/>
        <end position="285"/>
    </location>
    <ligand>
        <name>GTP</name>
        <dbReference type="ChEBI" id="CHEBI:37565"/>
    </ligand>
</feature>
<feature type="binding site" evidence="1">
    <location>
        <begin position="312"/>
        <end position="314"/>
    </location>
    <ligand>
        <name>GTP</name>
        <dbReference type="ChEBI" id="CHEBI:37565"/>
    </ligand>
</feature>
<comment type="function">
    <text evidence="1">An essential GTPase which binds GTP, GDP and possibly (p)ppGpp with moderate affinity, with high nucleotide exchange rates and a fairly low GTP hydrolysis rate. Plays a role in control of the cell cycle, stress response, ribosome biogenesis and in those bacteria that undergo differentiation, in morphogenesis control.</text>
</comment>
<comment type="cofactor">
    <cofactor evidence="1">
        <name>Mg(2+)</name>
        <dbReference type="ChEBI" id="CHEBI:18420"/>
    </cofactor>
</comment>
<comment type="subunit">
    <text evidence="1">Monomer.</text>
</comment>
<comment type="subcellular location">
    <subcellularLocation>
        <location evidence="1">Cytoplasm</location>
    </subcellularLocation>
</comment>
<comment type="similarity">
    <text evidence="1">Belongs to the TRAFAC class OBG-HflX-like GTPase superfamily. OBG GTPase family.</text>
</comment>